<keyword id="KW-0028">Amino-acid biosynthesis</keyword>
<keyword id="KW-0963">Cytoplasm</keyword>
<keyword id="KW-0413">Isomerase</keyword>
<keyword id="KW-0457">Lysine biosynthesis</keyword>
<protein>
    <recommendedName>
        <fullName evidence="1">Diaminopimelate epimerase</fullName>
        <shortName evidence="1">DAP epimerase</shortName>
        <ecNumber evidence="1">5.1.1.7</ecNumber>
    </recommendedName>
    <alternativeName>
        <fullName evidence="1">PLP-independent amino acid racemase</fullName>
    </alternativeName>
</protein>
<organism>
    <name type="scientific">Xanthomonas axonopodis pv. citri (strain 306)</name>
    <dbReference type="NCBI Taxonomy" id="190486"/>
    <lineage>
        <taxon>Bacteria</taxon>
        <taxon>Pseudomonadati</taxon>
        <taxon>Pseudomonadota</taxon>
        <taxon>Gammaproteobacteria</taxon>
        <taxon>Lysobacterales</taxon>
        <taxon>Lysobacteraceae</taxon>
        <taxon>Xanthomonas</taxon>
    </lineage>
</organism>
<dbReference type="EC" id="5.1.1.7" evidence="1"/>
<dbReference type="EMBL" id="AE008923">
    <property type="protein sequence ID" value="AAM35523.1"/>
    <property type="status" value="ALT_INIT"/>
    <property type="molecule type" value="Genomic_DNA"/>
</dbReference>
<dbReference type="RefSeq" id="WP_015462841.1">
    <property type="nucleotide sequence ID" value="NC_003919.1"/>
</dbReference>
<dbReference type="SMR" id="Q8PPQ1"/>
<dbReference type="GeneID" id="66909832"/>
<dbReference type="KEGG" id="xac:XAC0634"/>
<dbReference type="eggNOG" id="COG0253">
    <property type="taxonomic scope" value="Bacteria"/>
</dbReference>
<dbReference type="HOGENOM" id="CLU_053306_1_1_6"/>
<dbReference type="UniPathway" id="UPA00034">
    <property type="reaction ID" value="UER00025"/>
</dbReference>
<dbReference type="Proteomes" id="UP000000576">
    <property type="component" value="Chromosome"/>
</dbReference>
<dbReference type="GO" id="GO:0005829">
    <property type="term" value="C:cytosol"/>
    <property type="evidence" value="ECO:0007669"/>
    <property type="project" value="TreeGrafter"/>
</dbReference>
<dbReference type="GO" id="GO:0008837">
    <property type="term" value="F:diaminopimelate epimerase activity"/>
    <property type="evidence" value="ECO:0007669"/>
    <property type="project" value="UniProtKB-UniRule"/>
</dbReference>
<dbReference type="GO" id="GO:0009089">
    <property type="term" value="P:lysine biosynthetic process via diaminopimelate"/>
    <property type="evidence" value="ECO:0007669"/>
    <property type="project" value="UniProtKB-UniRule"/>
</dbReference>
<dbReference type="FunFam" id="3.10.310.10:FF:000001">
    <property type="entry name" value="Diaminopimelate epimerase"/>
    <property type="match status" value="1"/>
</dbReference>
<dbReference type="FunFam" id="3.10.310.10:FF:000004">
    <property type="entry name" value="Diaminopimelate epimerase"/>
    <property type="match status" value="1"/>
</dbReference>
<dbReference type="Gene3D" id="3.10.310.10">
    <property type="entry name" value="Diaminopimelate Epimerase, Chain A, domain 1"/>
    <property type="match status" value="2"/>
</dbReference>
<dbReference type="HAMAP" id="MF_00197">
    <property type="entry name" value="DAP_epimerase"/>
    <property type="match status" value="1"/>
</dbReference>
<dbReference type="InterPro" id="IPR018510">
    <property type="entry name" value="DAP_epimerase_AS"/>
</dbReference>
<dbReference type="InterPro" id="IPR001653">
    <property type="entry name" value="DAP_epimerase_DapF"/>
</dbReference>
<dbReference type="NCBIfam" id="TIGR00652">
    <property type="entry name" value="DapF"/>
    <property type="match status" value="1"/>
</dbReference>
<dbReference type="PANTHER" id="PTHR31689:SF0">
    <property type="entry name" value="DIAMINOPIMELATE EPIMERASE"/>
    <property type="match status" value="1"/>
</dbReference>
<dbReference type="PANTHER" id="PTHR31689">
    <property type="entry name" value="DIAMINOPIMELATE EPIMERASE, CHLOROPLASTIC"/>
    <property type="match status" value="1"/>
</dbReference>
<dbReference type="Pfam" id="PF01678">
    <property type="entry name" value="DAP_epimerase"/>
    <property type="match status" value="2"/>
</dbReference>
<dbReference type="SUPFAM" id="SSF54506">
    <property type="entry name" value="Diaminopimelate epimerase-like"/>
    <property type="match status" value="2"/>
</dbReference>
<dbReference type="PROSITE" id="PS01326">
    <property type="entry name" value="DAP_EPIMERASE"/>
    <property type="match status" value="1"/>
</dbReference>
<gene>
    <name evidence="1" type="primary">dapF</name>
    <name type="ordered locus">XAC0634</name>
</gene>
<comment type="function">
    <text evidence="1">Catalyzes the stereoinversion of LL-2,6-diaminopimelate (L,L-DAP) to meso-diaminopimelate (meso-DAP), a precursor of L-lysine and an essential component of the bacterial peptidoglycan.</text>
</comment>
<comment type="catalytic activity">
    <reaction evidence="1">
        <text>(2S,6S)-2,6-diaminopimelate = meso-2,6-diaminopimelate</text>
        <dbReference type="Rhea" id="RHEA:15393"/>
        <dbReference type="ChEBI" id="CHEBI:57609"/>
        <dbReference type="ChEBI" id="CHEBI:57791"/>
        <dbReference type="EC" id="5.1.1.7"/>
    </reaction>
</comment>
<comment type="pathway">
    <text evidence="1">Amino-acid biosynthesis; L-lysine biosynthesis via DAP pathway; DL-2,6-diaminopimelate from LL-2,6-diaminopimelate: step 1/1.</text>
</comment>
<comment type="subunit">
    <text evidence="1">Homodimer.</text>
</comment>
<comment type="subcellular location">
    <subcellularLocation>
        <location evidence="1">Cytoplasm</location>
    </subcellularLocation>
</comment>
<comment type="similarity">
    <text evidence="1">Belongs to the diaminopimelate epimerase family.</text>
</comment>
<comment type="sequence caution" evidence="2">
    <conflict type="erroneous initiation">
        <sequence resource="EMBL-CDS" id="AAM35523"/>
    </conflict>
    <text>Truncated N-terminus.</text>
</comment>
<accession>Q8PPQ1</accession>
<feature type="chain" id="PRO_0000149880" description="Diaminopimelate epimerase">
    <location>
        <begin position="1"/>
        <end position="284"/>
    </location>
</feature>
<feature type="active site" description="Proton donor" evidence="1">
    <location>
        <position position="82"/>
    </location>
</feature>
<feature type="active site" description="Proton acceptor" evidence="1">
    <location>
        <position position="227"/>
    </location>
</feature>
<feature type="binding site" evidence="1">
    <location>
        <position position="20"/>
    </location>
    <ligand>
        <name>substrate</name>
    </ligand>
</feature>
<feature type="binding site" evidence="1">
    <location>
        <position position="53"/>
    </location>
    <ligand>
        <name>substrate</name>
    </ligand>
</feature>
<feature type="binding site" evidence="1">
    <location>
        <position position="73"/>
    </location>
    <ligand>
        <name>substrate</name>
    </ligand>
</feature>
<feature type="binding site" evidence="1">
    <location>
        <begin position="83"/>
        <end position="84"/>
    </location>
    <ligand>
        <name>substrate</name>
    </ligand>
</feature>
<feature type="binding site" evidence="1">
    <location>
        <position position="167"/>
    </location>
    <ligand>
        <name>substrate</name>
    </ligand>
</feature>
<feature type="binding site" evidence="1">
    <location>
        <position position="200"/>
    </location>
    <ligand>
        <name>substrate</name>
    </ligand>
</feature>
<feature type="binding site" evidence="1">
    <location>
        <begin position="218"/>
        <end position="219"/>
    </location>
    <ligand>
        <name>substrate</name>
    </ligand>
</feature>
<feature type="binding site" evidence="1">
    <location>
        <begin position="228"/>
        <end position="229"/>
    </location>
    <ligand>
        <name>substrate</name>
    </ligand>
</feature>
<feature type="site" description="Could be important to modulate the pK values of the two catalytic cysteine residues" evidence="1">
    <location>
        <position position="169"/>
    </location>
</feature>
<feature type="site" description="Could be important to modulate the pK values of the two catalytic cysteine residues" evidence="1">
    <location>
        <position position="218"/>
    </location>
</feature>
<feature type="site" description="Important for dimerization" evidence="1">
    <location>
        <position position="278"/>
    </location>
</feature>
<proteinExistence type="inferred from homology"/>
<sequence length="284" mass="30092">MSADGRSGRLRFTKMHGAGNDFVVLDLRDGTPPPDAALAAQLADRHFGIGCDQILTIEAPRSEGAAAAYGIWNSDGSAARQCGNGARCVAAWLVRDGTAQGERFIIDSPATAHAVERLDGDRYAVAMGVPQFEPTQIPLAGFAHARDEYALPVHGETVRFGAVSMGNPHAVVEVGRVDAAPVERVGALLQQNAAFPDSVNVGFAQVVDPVHVRLRVFERGVGETLACGSGACAAAAVLMQRGRVERDVQVSLPGGELRIRWPGDQEQVVMSGPAVFVFDGEWNR</sequence>
<reference key="1">
    <citation type="journal article" date="2002" name="Nature">
        <title>Comparison of the genomes of two Xanthomonas pathogens with differing host specificities.</title>
        <authorList>
            <person name="da Silva A.C.R."/>
            <person name="Ferro J.A."/>
            <person name="Reinach F.C."/>
            <person name="Farah C.S."/>
            <person name="Furlan L.R."/>
            <person name="Quaggio R.B."/>
            <person name="Monteiro-Vitorello C.B."/>
            <person name="Van Sluys M.A."/>
            <person name="Almeida N.F. Jr."/>
            <person name="Alves L.M.C."/>
            <person name="do Amaral A.M."/>
            <person name="Bertolini M.C."/>
            <person name="Camargo L.E.A."/>
            <person name="Camarotte G."/>
            <person name="Cannavan F."/>
            <person name="Cardozo J."/>
            <person name="Chambergo F."/>
            <person name="Ciapina L.P."/>
            <person name="Cicarelli R.M.B."/>
            <person name="Coutinho L.L."/>
            <person name="Cursino-Santos J.R."/>
            <person name="El-Dorry H."/>
            <person name="Faria J.B."/>
            <person name="Ferreira A.J.S."/>
            <person name="Ferreira R.C.C."/>
            <person name="Ferro M.I.T."/>
            <person name="Formighieri E.F."/>
            <person name="Franco M.C."/>
            <person name="Greggio C.C."/>
            <person name="Gruber A."/>
            <person name="Katsuyama A.M."/>
            <person name="Kishi L.T."/>
            <person name="Leite R.P."/>
            <person name="Lemos E.G.M."/>
            <person name="Lemos M.V.F."/>
            <person name="Locali E.C."/>
            <person name="Machado M.A."/>
            <person name="Madeira A.M.B.N."/>
            <person name="Martinez-Rossi N.M."/>
            <person name="Martins E.C."/>
            <person name="Meidanis J."/>
            <person name="Menck C.F.M."/>
            <person name="Miyaki C.Y."/>
            <person name="Moon D.H."/>
            <person name="Moreira L.M."/>
            <person name="Novo M.T.M."/>
            <person name="Okura V.K."/>
            <person name="Oliveira M.C."/>
            <person name="Oliveira V.R."/>
            <person name="Pereira H.A."/>
            <person name="Rossi A."/>
            <person name="Sena J.A.D."/>
            <person name="Silva C."/>
            <person name="de Souza R.F."/>
            <person name="Spinola L.A.F."/>
            <person name="Takita M.A."/>
            <person name="Tamura R.E."/>
            <person name="Teixeira E.C."/>
            <person name="Tezza R.I.D."/>
            <person name="Trindade dos Santos M."/>
            <person name="Truffi D."/>
            <person name="Tsai S.M."/>
            <person name="White F.F."/>
            <person name="Setubal J.C."/>
            <person name="Kitajima J.P."/>
        </authorList>
    </citation>
    <scope>NUCLEOTIDE SEQUENCE [LARGE SCALE GENOMIC DNA]</scope>
    <source>
        <strain>306</strain>
    </source>
</reference>
<name>DAPF_XANAC</name>
<evidence type="ECO:0000255" key="1">
    <source>
        <dbReference type="HAMAP-Rule" id="MF_00197"/>
    </source>
</evidence>
<evidence type="ECO:0000305" key="2"/>